<keyword id="KW-1185">Reference proteome</keyword>
<keyword id="KW-0687">Ribonucleoprotein</keyword>
<keyword id="KW-0689">Ribosomal protein</keyword>
<keyword id="KW-0694">RNA-binding</keyword>
<keyword id="KW-0699">rRNA-binding</keyword>
<proteinExistence type="inferred from homology"/>
<gene>
    <name evidence="1" type="primary">rplF</name>
    <name type="ordered locus">RHE_CH01690</name>
</gene>
<evidence type="ECO:0000255" key="1">
    <source>
        <dbReference type="HAMAP-Rule" id="MF_01365"/>
    </source>
</evidence>
<evidence type="ECO:0000305" key="2"/>
<organism>
    <name type="scientific">Rhizobium etli (strain ATCC 51251 / DSM 11541 / JCM 21823 / NBRC 15573 / CFN 42)</name>
    <dbReference type="NCBI Taxonomy" id="347834"/>
    <lineage>
        <taxon>Bacteria</taxon>
        <taxon>Pseudomonadati</taxon>
        <taxon>Pseudomonadota</taxon>
        <taxon>Alphaproteobacteria</taxon>
        <taxon>Hyphomicrobiales</taxon>
        <taxon>Rhizobiaceae</taxon>
        <taxon>Rhizobium/Agrobacterium group</taxon>
        <taxon>Rhizobium</taxon>
    </lineage>
</organism>
<feature type="chain" id="PRO_0000260924" description="Large ribosomal subunit protein uL6">
    <location>
        <begin position="1"/>
        <end position="177"/>
    </location>
</feature>
<sequence>MSRIGKKPVQVPAGITATVEGQKVTAKGPKGELFFVANDEISLKLENNAVVVTPVNQSKDARSKWGMSRTMIEGIFKGVKDGYERKLEINGVGYRAAMQGKNLQLALGFSHDVVYEPPVGISIAVPKPTEIIVSGINKQQVGQVAAEIREYRGPEPYKGKGVKYADERIVRKEGKKK</sequence>
<accession>Q2K9K1</accession>
<dbReference type="EMBL" id="CP000133">
    <property type="protein sequence ID" value="ABC90485.1"/>
    <property type="molecule type" value="Genomic_DNA"/>
</dbReference>
<dbReference type="RefSeq" id="WP_011424986.1">
    <property type="nucleotide sequence ID" value="NC_007761.1"/>
</dbReference>
<dbReference type="SMR" id="Q2K9K1"/>
<dbReference type="KEGG" id="ret:RHE_CH01690"/>
<dbReference type="eggNOG" id="COG0097">
    <property type="taxonomic scope" value="Bacteria"/>
</dbReference>
<dbReference type="HOGENOM" id="CLU_065464_1_2_5"/>
<dbReference type="OrthoDB" id="9805007at2"/>
<dbReference type="Proteomes" id="UP000001936">
    <property type="component" value="Chromosome"/>
</dbReference>
<dbReference type="GO" id="GO:0022625">
    <property type="term" value="C:cytosolic large ribosomal subunit"/>
    <property type="evidence" value="ECO:0007669"/>
    <property type="project" value="TreeGrafter"/>
</dbReference>
<dbReference type="GO" id="GO:0019843">
    <property type="term" value="F:rRNA binding"/>
    <property type="evidence" value="ECO:0007669"/>
    <property type="project" value="UniProtKB-UniRule"/>
</dbReference>
<dbReference type="GO" id="GO:0003735">
    <property type="term" value="F:structural constituent of ribosome"/>
    <property type="evidence" value="ECO:0007669"/>
    <property type="project" value="InterPro"/>
</dbReference>
<dbReference type="GO" id="GO:0002181">
    <property type="term" value="P:cytoplasmic translation"/>
    <property type="evidence" value="ECO:0007669"/>
    <property type="project" value="TreeGrafter"/>
</dbReference>
<dbReference type="FunFam" id="3.90.930.12:FF:000001">
    <property type="entry name" value="50S ribosomal protein L6"/>
    <property type="match status" value="1"/>
</dbReference>
<dbReference type="Gene3D" id="3.90.930.12">
    <property type="entry name" value="Ribosomal protein L6, alpha-beta domain"/>
    <property type="match status" value="2"/>
</dbReference>
<dbReference type="HAMAP" id="MF_01365_B">
    <property type="entry name" value="Ribosomal_uL6_B"/>
    <property type="match status" value="1"/>
</dbReference>
<dbReference type="InterPro" id="IPR000702">
    <property type="entry name" value="Ribosomal_uL6-like"/>
</dbReference>
<dbReference type="InterPro" id="IPR036789">
    <property type="entry name" value="Ribosomal_uL6-like_a/b-dom_sf"/>
</dbReference>
<dbReference type="InterPro" id="IPR020040">
    <property type="entry name" value="Ribosomal_uL6_a/b-dom"/>
</dbReference>
<dbReference type="InterPro" id="IPR019906">
    <property type="entry name" value="Ribosomal_uL6_bac-type"/>
</dbReference>
<dbReference type="InterPro" id="IPR002358">
    <property type="entry name" value="Ribosomal_uL6_CS"/>
</dbReference>
<dbReference type="NCBIfam" id="TIGR03654">
    <property type="entry name" value="L6_bact"/>
    <property type="match status" value="1"/>
</dbReference>
<dbReference type="PANTHER" id="PTHR11655">
    <property type="entry name" value="60S/50S RIBOSOMAL PROTEIN L6/L9"/>
    <property type="match status" value="1"/>
</dbReference>
<dbReference type="PANTHER" id="PTHR11655:SF14">
    <property type="entry name" value="LARGE RIBOSOMAL SUBUNIT PROTEIN UL6M"/>
    <property type="match status" value="1"/>
</dbReference>
<dbReference type="Pfam" id="PF00347">
    <property type="entry name" value="Ribosomal_L6"/>
    <property type="match status" value="2"/>
</dbReference>
<dbReference type="PIRSF" id="PIRSF002162">
    <property type="entry name" value="Ribosomal_L6"/>
    <property type="match status" value="1"/>
</dbReference>
<dbReference type="PRINTS" id="PR00059">
    <property type="entry name" value="RIBOSOMALL6"/>
</dbReference>
<dbReference type="SUPFAM" id="SSF56053">
    <property type="entry name" value="Ribosomal protein L6"/>
    <property type="match status" value="2"/>
</dbReference>
<dbReference type="PROSITE" id="PS00525">
    <property type="entry name" value="RIBOSOMAL_L6_1"/>
    <property type="match status" value="1"/>
</dbReference>
<comment type="function">
    <text evidence="1">This protein binds to the 23S rRNA, and is important in its secondary structure. It is located near the subunit interface in the base of the L7/L12 stalk, and near the tRNA binding site of the peptidyltransferase center.</text>
</comment>
<comment type="subunit">
    <text evidence="1">Part of the 50S ribosomal subunit.</text>
</comment>
<comment type="similarity">
    <text evidence="1">Belongs to the universal ribosomal protein uL6 family.</text>
</comment>
<name>RL6_RHIEC</name>
<protein>
    <recommendedName>
        <fullName evidence="1">Large ribosomal subunit protein uL6</fullName>
    </recommendedName>
    <alternativeName>
        <fullName evidence="2">50S ribosomal protein L6</fullName>
    </alternativeName>
</protein>
<reference key="1">
    <citation type="journal article" date="2006" name="Proc. Natl. Acad. Sci. U.S.A.">
        <title>The partitioned Rhizobium etli genome: genetic and metabolic redundancy in seven interacting replicons.</title>
        <authorList>
            <person name="Gonzalez V."/>
            <person name="Santamaria R.I."/>
            <person name="Bustos P."/>
            <person name="Hernandez-Gonzalez I."/>
            <person name="Medrano-Soto A."/>
            <person name="Moreno-Hagelsieb G."/>
            <person name="Janga S.C."/>
            <person name="Ramirez M.A."/>
            <person name="Jimenez-Jacinto V."/>
            <person name="Collado-Vides J."/>
            <person name="Davila G."/>
        </authorList>
    </citation>
    <scope>NUCLEOTIDE SEQUENCE [LARGE SCALE GENOMIC DNA]</scope>
    <source>
        <strain>ATCC 51251 / DSM 11541 / JCM 21823 / NBRC 15573 / CFN 42</strain>
    </source>
</reference>